<comment type="function">
    <text evidence="1">Plasma membrane osmosensor that activates the high osmolarity glycerol (HOG) MAPK signaling pathway in response to high osmolarity.</text>
</comment>
<comment type="subunit">
    <text evidence="1">Forms homooligomers.</text>
</comment>
<comment type="subcellular location">
    <subcellularLocation>
        <location evidence="1">Cell membrane</location>
        <topology evidence="1">Multi-pass membrane protein</topology>
    </subcellularLocation>
</comment>
<comment type="similarity">
    <text evidence="4">Belongs to the SHO1 family.</text>
</comment>
<dbReference type="EMBL" id="AE016820">
    <property type="protein sequence ID" value="AAS54205.1"/>
    <property type="molecule type" value="Genomic_DNA"/>
</dbReference>
<dbReference type="RefSeq" id="NP_986381.1">
    <property type="nucleotide sequence ID" value="NM_211443.1"/>
</dbReference>
<dbReference type="SMR" id="Q751J2"/>
<dbReference type="FunCoup" id="Q751J2">
    <property type="interactions" value="206"/>
</dbReference>
<dbReference type="STRING" id="284811.Q751J2"/>
<dbReference type="EnsemblFungi" id="AAS54205">
    <property type="protein sequence ID" value="AAS54205"/>
    <property type="gene ID" value="AGOS_AGL286C"/>
</dbReference>
<dbReference type="GeneID" id="4622674"/>
<dbReference type="KEGG" id="ago:AGOS_AGL286C"/>
<dbReference type="eggNOG" id="ENOG502QW7A">
    <property type="taxonomic scope" value="Eukaryota"/>
</dbReference>
<dbReference type="HOGENOM" id="CLU_043316_0_0_1"/>
<dbReference type="InParanoid" id="Q751J2"/>
<dbReference type="OMA" id="NIVWIFY"/>
<dbReference type="OrthoDB" id="5983572at2759"/>
<dbReference type="Proteomes" id="UP000000591">
    <property type="component" value="Chromosome VII"/>
</dbReference>
<dbReference type="GO" id="GO:0005935">
    <property type="term" value="C:cellular bud neck"/>
    <property type="evidence" value="ECO:0007669"/>
    <property type="project" value="EnsemblFungi"/>
</dbReference>
<dbReference type="GO" id="GO:0044697">
    <property type="term" value="C:HICS complex"/>
    <property type="evidence" value="ECO:0007669"/>
    <property type="project" value="EnsemblFungi"/>
</dbReference>
<dbReference type="GO" id="GO:0043332">
    <property type="term" value="C:mating projection tip"/>
    <property type="evidence" value="ECO:0007669"/>
    <property type="project" value="EnsemblFungi"/>
</dbReference>
<dbReference type="GO" id="GO:0005886">
    <property type="term" value="C:plasma membrane"/>
    <property type="evidence" value="ECO:0007669"/>
    <property type="project" value="UniProtKB-SubCell"/>
</dbReference>
<dbReference type="GO" id="GO:0005078">
    <property type="term" value="F:MAP-kinase scaffold activity"/>
    <property type="evidence" value="ECO:0007669"/>
    <property type="project" value="EnsemblFungi"/>
</dbReference>
<dbReference type="GO" id="GO:0005034">
    <property type="term" value="F:osmosensor activity"/>
    <property type="evidence" value="ECO:0007669"/>
    <property type="project" value="EnsemblFungi"/>
</dbReference>
<dbReference type="GO" id="GO:0030010">
    <property type="term" value="P:establishment of cell polarity"/>
    <property type="evidence" value="ECO:0007669"/>
    <property type="project" value="EnsemblFungi"/>
</dbReference>
<dbReference type="GO" id="GO:0007232">
    <property type="term" value="P:osmosensory signaling pathway via Sho1 osmosensor"/>
    <property type="evidence" value="ECO:0007669"/>
    <property type="project" value="EnsemblFungi"/>
</dbReference>
<dbReference type="GO" id="GO:0030833">
    <property type="term" value="P:regulation of actin filament polymerization"/>
    <property type="evidence" value="ECO:0000318"/>
    <property type="project" value="GO_Central"/>
</dbReference>
<dbReference type="GO" id="GO:0001402">
    <property type="term" value="P:signal transduction involved in filamentous growth"/>
    <property type="evidence" value="ECO:0007669"/>
    <property type="project" value="EnsemblFungi"/>
</dbReference>
<dbReference type="CDD" id="cd11855">
    <property type="entry name" value="SH3_Sho1p"/>
    <property type="match status" value="1"/>
</dbReference>
<dbReference type="FunFam" id="2.30.30.40:FF:000213">
    <property type="entry name" value="High osmolarity signaling protein SHO1"/>
    <property type="match status" value="1"/>
</dbReference>
<dbReference type="Gene3D" id="2.30.30.40">
    <property type="entry name" value="SH3 Domains"/>
    <property type="match status" value="1"/>
</dbReference>
<dbReference type="InterPro" id="IPR036028">
    <property type="entry name" value="SH3-like_dom_sf"/>
</dbReference>
<dbReference type="InterPro" id="IPR001452">
    <property type="entry name" value="SH3_domain"/>
</dbReference>
<dbReference type="InterPro" id="IPR035522">
    <property type="entry name" value="Sho1_SH3"/>
</dbReference>
<dbReference type="PANTHER" id="PTHR15735">
    <property type="entry name" value="FCH AND DOUBLE SH3 DOMAINS PROTEIN"/>
    <property type="match status" value="1"/>
</dbReference>
<dbReference type="PANTHER" id="PTHR15735:SF20">
    <property type="entry name" value="HIGH OSMOLARITY SIGNALING PROTEIN SHO1"/>
    <property type="match status" value="1"/>
</dbReference>
<dbReference type="Pfam" id="PF00018">
    <property type="entry name" value="SH3_1"/>
    <property type="match status" value="1"/>
</dbReference>
<dbReference type="PRINTS" id="PR00452">
    <property type="entry name" value="SH3DOMAIN"/>
</dbReference>
<dbReference type="SMART" id="SM00326">
    <property type="entry name" value="SH3"/>
    <property type="match status" value="1"/>
</dbReference>
<dbReference type="SUPFAM" id="SSF50044">
    <property type="entry name" value="SH3-domain"/>
    <property type="match status" value="1"/>
</dbReference>
<dbReference type="PROSITE" id="PS50002">
    <property type="entry name" value="SH3"/>
    <property type="match status" value="1"/>
</dbReference>
<reference key="1">
    <citation type="journal article" date="2004" name="Science">
        <title>The Ashbya gossypii genome as a tool for mapping the ancient Saccharomyces cerevisiae genome.</title>
        <authorList>
            <person name="Dietrich F.S."/>
            <person name="Voegeli S."/>
            <person name="Brachat S."/>
            <person name="Lerch A."/>
            <person name="Gates K."/>
            <person name="Steiner S."/>
            <person name="Mohr C."/>
            <person name="Poehlmann R."/>
            <person name="Luedi P."/>
            <person name="Choi S."/>
            <person name="Wing R.A."/>
            <person name="Flavier A."/>
            <person name="Gaffney T.D."/>
            <person name="Philippsen P."/>
        </authorList>
    </citation>
    <scope>NUCLEOTIDE SEQUENCE [LARGE SCALE GENOMIC DNA]</scope>
    <source>
        <strain>ATCC 10895 / CBS 109.51 / FGSC 9923 / NRRL Y-1056</strain>
    </source>
</reference>
<reference key="2">
    <citation type="journal article" date="2013" name="G3 (Bethesda)">
        <title>Genomes of Ashbya fungi isolated from insects reveal four mating-type loci, numerous translocations, lack of transposons, and distinct gene duplications.</title>
        <authorList>
            <person name="Dietrich F.S."/>
            <person name="Voegeli S."/>
            <person name="Kuo S."/>
            <person name="Philippsen P."/>
        </authorList>
    </citation>
    <scope>GENOME REANNOTATION</scope>
    <source>
        <strain>ATCC 10895 / CBS 109.51 / FGSC 9923 / NRRL Y-1056</strain>
    </source>
</reference>
<keyword id="KW-1003">Cell membrane</keyword>
<keyword id="KW-0472">Membrane</keyword>
<keyword id="KW-1185">Reference proteome</keyword>
<keyword id="KW-0728">SH3 domain</keyword>
<keyword id="KW-0346">Stress response</keyword>
<keyword id="KW-0812">Transmembrane</keyword>
<keyword id="KW-1133">Transmembrane helix</keyword>
<sequence length="330" mass="35963">MTLRATKARQQRVSPHIGHTFSFGNLVGDPFAISTLSISTIAWLITLGGGIATKKMPHFSWWGIAFQFVMMVCFVVIYLWDLVDYYRGFLAAGVGVAFVYSTNSCSQLIYQEEPQQAAGSAGFMMLSIVNMIWMFYFGADNAAPANRWIDSFSIRGIRASQVESSLALARSQKAVASPQPAATAFYGGLEGHSQKYVSSTALNGFENTDPHTSTAFALGPEGPTQRNLDTHGTSTYVTDTTNGNTETTMGDTLGLYSDMGDELVNFPYTAKALYAYEADASDAYEISFQQGEILRVGDIEGRWWKAKKANGETGIIPSNYVELVDDPAAL</sequence>
<name>SHO1_EREGS</name>
<feature type="chain" id="PRO_0000410357" description="High osmolarity signaling protein SHO1">
    <location>
        <begin position="1"/>
        <end position="330"/>
    </location>
</feature>
<feature type="topological domain" description="Cytoplasmic" evidence="2">
    <location>
        <begin position="1"/>
        <end position="30"/>
    </location>
</feature>
<feature type="transmembrane region" description="Helical" evidence="2">
    <location>
        <begin position="31"/>
        <end position="51"/>
    </location>
</feature>
<feature type="topological domain" description="Extracellular" evidence="2">
    <location>
        <begin position="52"/>
        <end position="58"/>
    </location>
</feature>
<feature type="transmembrane region" description="Helical" evidence="2">
    <location>
        <begin position="59"/>
        <end position="79"/>
    </location>
</feature>
<feature type="topological domain" description="Cytoplasmic" evidence="2">
    <location>
        <begin position="80"/>
        <end position="88"/>
    </location>
</feature>
<feature type="transmembrane region" description="Helical" evidence="2">
    <location>
        <begin position="89"/>
        <end position="109"/>
    </location>
</feature>
<feature type="topological domain" description="Extracellular" evidence="2">
    <location>
        <begin position="110"/>
        <end position="116"/>
    </location>
</feature>
<feature type="transmembrane region" description="Helical" evidence="2">
    <location>
        <begin position="117"/>
        <end position="137"/>
    </location>
</feature>
<feature type="topological domain" description="Cytoplasmic" evidence="2">
    <location>
        <begin position="138"/>
        <end position="330"/>
    </location>
</feature>
<feature type="domain" description="SH3" evidence="3">
    <location>
        <begin position="265"/>
        <end position="326"/>
    </location>
</feature>
<proteinExistence type="inferred from homology"/>
<protein>
    <recommendedName>
        <fullName>High osmolarity signaling protein SHO1</fullName>
    </recommendedName>
    <alternativeName>
        <fullName>Osmosensor SHO1</fullName>
    </alternativeName>
</protein>
<accession>Q751J2</accession>
<organism>
    <name type="scientific">Eremothecium gossypii (strain ATCC 10895 / CBS 109.51 / FGSC 9923 / NRRL Y-1056)</name>
    <name type="common">Yeast</name>
    <name type="synonym">Ashbya gossypii</name>
    <dbReference type="NCBI Taxonomy" id="284811"/>
    <lineage>
        <taxon>Eukaryota</taxon>
        <taxon>Fungi</taxon>
        <taxon>Dikarya</taxon>
        <taxon>Ascomycota</taxon>
        <taxon>Saccharomycotina</taxon>
        <taxon>Saccharomycetes</taxon>
        <taxon>Saccharomycetales</taxon>
        <taxon>Saccharomycetaceae</taxon>
        <taxon>Eremothecium</taxon>
    </lineage>
</organism>
<gene>
    <name type="primary">SHO1</name>
    <name type="ordered locus">AGL286C</name>
</gene>
<evidence type="ECO:0000250" key="1"/>
<evidence type="ECO:0000255" key="2"/>
<evidence type="ECO:0000255" key="3">
    <source>
        <dbReference type="PROSITE-ProRule" id="PRU00192"/>
    </source>
</evidence>
<evidence type="ECO:0000305" key="4"/>